<comment type="subcellular location">
    <subcellularLocation>
        <location evidence="5">Secreted</location>
    </subcellularLocation>
    <text evidence="6">Has a coil conformation.</text>
</comment>
<comment type="tissue specificity">
    <text evidence="5">Expressed by the venom gland.</text>
</comment>
<comment type="miscellaneous">
    <text evidence="5">Not found in venom, suggesting that it is a minor component.</text>
</comment>
<comment type="miscellaneous">
    <text evidence="2">Negative results: has no activity against fungi (B.cinerea and C.albicans) and bacteria (E.coli and S.aureus) (PubMed:21184791). Has no hemolytic activity against human erythrocytes (PubMed:21184791). Does not show cytolytic activity against insect cell lines (PubMed:21184791). Does not induce feeding disorder in lepidopteran larvae after peptide injection in the vicinity of the head and thorax (PubMed:21184791).</text>
</comment>
<proteinExistence type="evidence at protein level"/>
<name>VP3_EUMPO</name>
<reference key="1">
    <citation type="journal article" date="2010" name="Toxicon">
        <title>Differential gene expression profiles in the venom gland/sac of Eumenes pomiformis (Hymenoptera: Eumenidae).</title>
        <authorList>
            <person name="Baek J.H."/>
            <person name="Lee S.H."/>
        </authorList>
    </citation>
    <scope>NUCLEOTIDE SEQUENCE [MRNA]</scope>
    <scope>PROBABLE AMIDATION AT LEU-48</scope>
    <source>
        <tissue>Venom gland</tissue>
    </source>
</reference>
<reference key="2">
    <citation type="journal article" date="2011" name="Peptides">
        <title>Venom peptides from solitary hunting wasps induce feeding disorder in lepidopteran larvae.</title>
        <authorList>
            <person name="Baek J.H."/>
            <person name="Ji Y."/>
            <person name="Shin J.S."/>
            <person name="Lee S."/>
            <person name="Lee S.H."/>
        </authorList>
    </citation>
    <scope>SYNTHESIS OF 38-48</scope>
    <scope>MUTAGENESIS OF ALA-38</scope>
</reference>
<dbReference type="EMBL" id="GU136234">
    <property type="protein sequence ID" value="ACZ37395.1"/>
    <property type="molecule type" value="mRNA"/>
</dbReference>
<dbReference type="GO" id="GO:0005576">
    <property type="term" value="C:extracellular region"/>
    <property type="evidence" value="ECO:0007669"/>
    <property type="project" value="UniProtKB-SubCell"/>
</dbReference>
<organism>
    <name type="scientific">Eumenes pomiformis</name>
    <name type="common">Potter wasp</name>
    <name type="synonym">Vespa pomiformis</name>
    <dbReference type="NCBI Taxonomy" id="693051"/>
    <lineage>
        <taxon>Eukaryota</taxon>
        <taxon>Metazoa</taxon>
        <taxon>Ecdysozoa</taxon>
        <taxon>Arthropoda</taxon>
        <taxon>Hexapoda</taxon>
        <taxon>Insecta</taxon>
        <taxon>Pterygota</taxon>
        <taxon>Neoptera</taxon>
        <taxon>Endopterygota</taxon>
        <taxon>Hymenoptera</taxon>
        <taxon>Apocrita</taxon>
        <taxon>Aculeata</taxon>
        <taxon>Vespoidea</taxon>
        <taxon>Vespidae</taxon>
        <taxon>Eumeninae</taxon>
        <taxon>Eumenes</taxon>
    </lineage>
</organism>
<evidence type="ECO:0000255" key="1"/>
<evidence type="ECO:0000269" key="2">
    <source>
    </source>
</evidence>
<evidence type="ECO:0000303" key="3">
    <source>
    </source>
</evidence>
<evidence type="ECO:0000305" key="4"/>
<evidence type="ECO:0000305" key="5">
    <source>
    </source>
</evidence>
<evidence type="ECO:0000305" key="6">
    <source>
    </source>
</evidence>
<evidence type="ECO:0000312" key="7">
    <source>
        <dbReference type="EMBL" id="ACZ37395.1"/>
    </source>
</evidence>
<accession>D1MEI9</accession>
<sequence>MRFTFVLVIAATVAVLGFFGINAEPMPDPHAEPYPDAAINPKSVQSLLG</sequence>
<protein>
    <recommendedName>
        <fullName evidence="3">Venom peptide 3</fullName>
        <shortName evidence="3">EpVP3</shortName>
        <shortName evidence="7">VP3</shortName>
    </recommendedName>
</protein>
<keyword id="KW-0027">Amidation</keyword>
<keyword id="KW-0677">Repeat</keyword>
<keyword id="KW-0964">Secreted</keyword>
<keyword id="KW-0732">Signal</keyword>
<feature type="signal peptide" evidence="1">
    <location>
        <begin position="1"/>
        <end position="23"/>
    </location>
</feature>
<feature type="propeptide" id="PRO_0000453651" evidence="5">
    <location>
        <begin position="24"/>
        <end position="37"/>
    </location>
</feature>
<feature type="peptide" id="PRO_0000453652" description="Venom peptide 3" evidence="5">
    <location>
        <begin position="38"/>
        <end position="48"/>
    </location>
</feature>
<feature type="repeat" description="AXPX 1" evidence="4">
    <location>
        <begin position="23"/>
        <end position="26"/>
    </location>
</feature>
<feature type="repeat" description="AXPX 2" evidence="4">
    <location>
        <begin position="31"/>
        <end position="34"/>
    </location>
</feature>
<feature type="modified residue" description="Leucine amide" evidence="5">
    <location>
        <position position="48"/>
    </location>
</feature>
<feature type="mutagenesis site" description="In EpVP3-short; no change in activity." evidence="2">
    <location>
        <position position="38"/>
    </location>
</feature>